<evidence type="ECO:0000250" key="1"/>
<evidence type="ECO:0000305" key="2"/>
<dbReference type="EC" id="5.3.2.-"/>
<dbReference type="EMBL" id="X75047">
    <property type="protein sequence ID" value="CAA52960.1"/>
    <property type="molecule type" value="Genomic_DNA"/>
</dbReference>
<dbReference type="EMBL" id="CP002038">
    <property type="protein sequence ID" value="ADM96340.1"/>
    <property type="molecule type" value="Genomic_DNA"/>
</dbReference>
<dbReference type="PIR" id="B55215">
    <property type="entry name" value="B55215"/>
</dbReference>
<dbReference type="RefSeq" id="WP_013315829.1">
    <property type="nucleotide sequence ID" value="NC_014500.1"/>
</dbReference>
<dbReference type="SMR" id="P45418"/>
<dbReference type="STRING" id="198628.Dda3937_02002"/>
<dbReference type="KEGG" id="ddd:Dda3937_02002"/>
<dbReference type="PATRIC" id="fig|198628.6.peg.128"/>
<dbReference type="eggNOG" id="COG1942">
    <property type="taxonomic scope" value="Bacteria"/>
</dbReference>
<dbReference type="HOGENOM" id="CLU_148073_1_2_6"/>
<dbReference type="OrthoDB" id="9799841at2"/>
<dbReference type="Proteomes" id="UP000006859">
    <property type="component" value="Chromosome"/>
</dbReference>
<dbReference type="GO" id="GO:0016853">
    <property type="term" value="F:isomerase activity"/>
    <property type="evidence" value="ECO:0007669"/>
    <property type="project" value="UniProtKB-KW"/>
</dbReference>
<dbReference type="CDD" id="cd00491">
    <property type="entry name" value="4Oxalocrotonate_Tautomerase"/>
    <property type="match status" value="1"/>
</dbReference>
<dbReference type="Gene3D" id="3.30.429.10">
    <property type="entry name" value="Macrophage Migration Inhibitory Factor"/>
    <property type="match status" value="1"/>
</dbReference>
<dbReference type="InterPro" id="IPR018191">
    <property type="entry name" value="4-OT"/>
</dbReference>
<dbReference type="InterPro" id="IPR004370">
    <property type="entry name" value="4-OT-like_dom"/>
</dbReference>
<dbReference type="InterPro" id="IPR014347">
    <property type="entry name" value="Tautomerase/MIF_sf"/>
</dbReference>
<dbReference type="NCBIfam" id="TIGR00013">
    <property type="entry name" value="taut"/>
    <property type="match status" value="1"/>
</dbReference>
<dbReference type="PANTHER" id="PTHR35530:SF1">
    <property type="entry name" value="2-HYDROXYMUCONATE TAUTOMERASE"/>
    <property type="match status" value="1"/>
</dbReference>
<dbReference type="PANTHER" id="PTHR35530">
    <property type="entry name" value="TAUTOMERASE-RELATED"/>
    <property type="match status" value="1"/>
</dbReference>
<dbReference type="Pfam" id="PF01361">
    <property type="entry name" value="Tautomerase"/>
    <property type="match status" value="1"/>
</dbReference>
<dbReference type="SUPFAM" id="SSF55331">
    <property type="entry name" value="Tautomerase/MIF"/>
    <property type="match status" value="1"/>
</dbReference>
<sequence>MPFVNIRITKDGVTAEQKKQLIAGVTQLLVDTLGKNPATTVVIIDEVETDNWGIGGESVTERRQQAS</sequence>
<name>Y2002_DICD3</name>
<proteinExistence type="inferred from homology"/>
<accession>P45418</accession>
<accession>E0SFG9</accession>
<gene>
    <name type="ordered locus">Dda3937_02002</name>
</gene>
<comment type="similarity">
    <text evidence="2">Belongs to the 4-oxalocrotonate tautomerase family.</text>
</comment>
<reference key="1">
    <citation type="journal article" date="1994" name="J. Bacteriol.">
        <title>Molecular characterization of the Erwinia chrysanthemi kdgK gene involved in pectin degradation.</title>
        <authorList>
            <person name="Hugouvieux-Cotte-Pattat N."/>
            <person name="Nasser W."/>
            <person name="Robert-Baudouy J."/>
        </authorList>
    </citation>
    <scope>NUCLEOTIDE SEQUENCE [GENOMIC DNA]</scope>
    <source>
        <strain>3937</strain>
    </source>
</reference>
<reference key="2">
    <citation type="journal article" date="2011" name="J. Bacteriol.">
        <title>Genome sequence of the plant-pathogenic bacterium Dickeya dadantii 3937.</title>
        <authorList>
            <person name="Glasner J.D."/>
            <person name="Yang C.H."/>
            <person name="Reverchon S."/>
            <person name="Hugouvieux-Cotte-Pattat N."/>
            <person name="Condemine G."/>
            <person name="Bohin J.P."/>
            <person name="Van Gijsegem F."/>
            <person name="Yang S."/>
            <person name="Franza T."/>
            <person name="Expert D."/>
            <person name="Plunkett G. III"/>
            <person name="San Francisco M.J."/>
            <person name="Charkowski A.O."/>
            <person name="Py B."/>
            <person name="Bell K."/>
            <person name="Rauscher L."/>
            <person name="Rodriguez-Palenzuela P."/>
            <person name="Toussaint A."/>
            <person name="Holeva M.C."/>
            <person name="He S.Y."/>
            <person name="Douet V."/>
            <person name="Boccara M."/>
            <person name="Blanco C."/>
            <person name="Toth I."/>
            <person name="Anderson B.D."/>
            <person name="Biehl B.S."/>
            <person name="Mau B."/>
            <person name="Flynn S.M."/>
            <person name="Barras F."/>
            <person name="Lindeberg M."/>
            <person name="Birch P.R."/>
            <person name="Tsuyumu S."/>
            <person name="Shi X."/>
            <person name="Hibbing M."/>
            <person name="Yap M.N."/>
            <person name="Carpentier M."/>
            <person name="Dassa E."/>
            <person name="Umehara M."/>
            <person name="Kim J.F."/>
            <person name="Rusch M."/>
            <person name="Soni P."/>
            <person name="Mayhew G.F."/>
            <person name="Fouts D.E."/>
            <person name="Gill S.R."/>
            <person name="Blattner F.R."/>
            <person name="Keen N.T."/>
            <person name="Perna N.T."/>
        </authorList>
    </citation>
    <scope>NUCLEOTIDE SEQUENCE [LARGE SCALE GENOMIC DNA]</scope>
    <source>
        <strain>3937</strain>
    </source>
</reference>
<protein>
    <recommendedName>
        <fullName>Probable tautomerase K2</fullName>
        <ecNumber>5.3.2.-</ecNumber>
    </recommendedName>
</protein>
<feature type="initiator methionine" description="Removed" evidence="1">
    <location>
        <position position="1"/>
    </location>
</feature>
<feature type="chain" id="PRO_0000209529" description="Probable tautomerase K2">
    <location>
        <begin position="2"/>
        <end position="67"/>
    </location>
</feature>
<feature type="active site" description="Proton acceptor; via imino nitrogen" evidence="1">
    <location>
        <position position="2"/>
    </location>
</feature>
<feature type="sequence conflict" description="In Ref. 1; CAA52960." evidence="2" ref="1">
    <original>S</original>
    <variation>HDRKHNV</variation>
    <location>
        <position position="67"/>
    </location>
</feature>
<organism>
    <name type="scientific">Dickeya dadantii (strain 3937)</name>
    <name type="common">Erwinia chrysanthemi (strain 3937)</name>
    <dbReference type="NCBI Taxonomy" id="198628"/>
    <lineage>
        <taxon>Bacteria</taxon>
        <taxon>Pseudomonadati</taxon>
        <taxon>Pseudomonadota</taxon>
        <taxon>Gammaproteobacteria</taxon>
        <taxon>Enterobacterales</taxon>
        <taxon>Pectobacteriaceae</taxon>
        <taxon>Dickeya</taxon>
    </lineage>
</organism>
<keyword id="KW-0413">Isomerase</keyword>
<keyword id="KW-1185">Reference proteome</keyword>